<dbReference type="EC" id="2.7.2.8" evidence="1"/>
<dbReference type="EMBL" id="X99978">
    <property type="protein sequence ID" value="CAA68241.1"/>
    <property type="molecule type" value="Genomic_DNA"/>
</dbReference>
<dbReference type="EMBL" id="AL935263">
    <property type="protein sequence ID" value="CCC78020.1"/>
    <property type="molecule type" value="Genomic_DNA"/>
</dbReference>
<dbReference type="RefSeq" id="WP_003642071.1">
    <property type="nucleotide sequence ID" value="NC_004567.2"/>
</dbReference>
<dbReference type="RefSeq" id="YP_004888534.1">
    <property type="nucleotide sequence ID" value="NC_004567.2"/>
</dbReference>
<dbReference type="SMR" id="O08320"/>
<dbReference type="STRING" id="220668.lp_0530"/>
<dbReference type="EnsemblBacteria" id="CCC78020">
    <property type="protein sequence ID" value="CCC78020"/>
    <property type="gene ID" value="lp_0530"/>
</dbReference>
<dbReference type="GeneID" id="77217136"/>
<dbReference type="KEGG" id="lpl:lp_0530"/>
<dbReference type="PATRIC" id="fig|220668.9.peg.438"/>
<dbReference type="eggNOG" id="COG0548">
    <property type="taxonomic scope" value="Bacteria"/>
</dbReference>
<dbReference type="HOGENOM" id="CLU_053680_1_0_9"/>
<dbReference type="OrthoDB" id="9803155at2"/>
<dbReference type="PhylomeDB" id="O08320"/>
<dbReference type="UniPathway" id="UPA00068">
    <property type="reaction ID" value="UER00107"/>
</dbReference>
<dbReference type="Proteomes" id="UP000000432">
    <property type="component" value="Chromosome"/>
</dbReference>
<dbReference type="GO" id="GO:0005737">
    <property type="term" value="C:cytoplasm"/>
    <property type="evidence" value="ECO:0007669"/>
    <property type="project" value="UniProtKB-SubCell"/>
</dbReference>
<dbReference type="GO" id="GO:0003991">
    <property type="term" value="F:acetylglutamate kinase activity"/>
    <property type="evidence" value="ECO:0007669"/>
    <property type="project" value="UniProtKB-UniRule"/>
</dbReference>
<dbReference type="GO" id="GO:0005524">
    <property type="term" value="F:ATP binding"/>
    <property type="evidence" value="ECO:0007669"/>
    <property type="project" value="UniProtKB-UniRule"/>
</dbReference>
<dbReference type="GO" id="GO:0042450">
    <property type="term" value="P:arginine biosynthetic process via ornithine"/>
    <property type="evidence" value="ECO:0007669"/>
    <property type="project" value="UniProtKB-UniRule"/>
</dbReference>
<dbReference type="GO" id="GO:0006526">
    <property type="term" value="P:L-arginine biosynthetic process"/>
    <property type="evidence" value="ECO:0007669"/>
    <property type="project" value="UniProtKB-UniPathway"/>
</dbReference>
<dbReference type="CDD" id="cd04238">
    <property type="entry name" value="AAK_NAGK-like"/>
    <property type="match status" value="1"/>
</dbReference>
<dbReference type="Gene3D" id="3.40.1160.10">
    <property type="entry name" value="Acetylglutamate kinase-like"/>
    <property type="match status" value="1"/>
</dbReference>
<dbReference type="HAMAP" id="MF_00082">
    <property type="entry name" value="ArgB"/>
    <property type="match status" value="1"/>
</dbReference>
<dbReference type="InterPro" id="IPR036393">
    <property type="entry name" value="AceGlu_kinase-like_sf"/>
</dbReference>
<dbReference type="InterPro" id="IPR004662">
    <property type="entry name" value="AcgluKinase_fam"/>
</dbReference>
<dbReference type="InterPro" id="IPR037528">
    <property type="entry name" value="ArgB"/>
</dbReference>
<dbReference type="InterPro" id="IPR001048">
    <property type="entry name" value="Asp/Glu/Uridylate_kinase"/>
</dbReference>
<dbReference type="NCBIfam" id="TIGR00761">
    <property type="entry name" value="argB"/>
    <property type="match status" value="1"/>
</dbReference>
<dbReference type="PANTHER" id="PTHR23342">
    <property type="entry name" value="N-ACETYLGLUTAMATE SYNTHASE"/>
    <property type="match status" value="1"/>
</dbReference>
<dbReference type="PANTHER" id="PTHR23342:SF0">
    <property type="entry name" value="N-ACETYLGLUTAMATE SYNTHASE, MITOCHONDRIAL"/>
    <property type="match status" value="1"/>
</dbReference>
<dbReference type="Pfam" id="PF00696">
    <property type="entry name" value="AA_kinase"/>
    <property type="match status" value="1"/>
</dbReference>
<dbReference type="PIRSF" id="PIRSF000728">
    <property type="entry name" value="NAGK"/>
    <property type="match status" value="1"/>
</dbReference>
<dbReference type="SUPFAM" id="SSF53633">
    <property type="entry name" value="Carbamate kinase-like"/>
    <property type="match status" value="1"/>
</dbReference>
<comment type="function">
    <text evidence="1">Catalyzes the ATP-dependent phosphorylation of N-acetyl-L-glutamate.</text>
</comment>
<comment type="catalytic activity">
    <reaction evidence="1">
        <text>N-acetyl-L-glutamate + ATP = N-acetyl-L-glutamyl 5-phosphate + ADP</text>
        <dbReference type="Rhea" id="RHEA:14629"/>
        <dbReference type="ChEBI" id="CHEBI:30616"/>
        <dbReference type="ChEBI" id="CHEBI:44337"/>
        <dbReference type="ChEBI" id="CHEBI:57936"/>
        <dbReference type="ChEBI" id="CHEBI:456216"/>
        <dbReference type="EC" id="2.7.2.8"/>
    </reaction>
</comment>
<comment type="pathway">
    <text evidence="1">Amino-acid biosynthesis; L-arginine biosynthesis; N(2)-acetyl-L-ornithine from L-glutamate: step 2/4.</text>
</comment>
<comment type="subcellular location">
    <subcellularLocation>
        <location evidence="1">Cytoplasm</location>
    </subcellularLocation>
</comment>
<comment type="similarity">
    <text evidence="1">Belongs to the acetylglutamate kinase family. ArgB subfamily.</text>
</comment>
<evidence type="ECO:0000255" key="1">
    <source>
        <dbReference type="HAMAP-Rule" id="MF_00082"/>
    </source>
</evidence>
<evidence type="ECO:0000305" key="2"/>
<sequence length="248" mass="26589">MTKLIVIKIGGQAISQLSTTFFDQIAQWYQQHYQILIVHGGGPMINRLTTQLALPVHKVNGLRVTDAATLVLTKLALLGDAQPALLAKLTQHHLPVLGLNAADNQLLTGELIDYRQLGYVGRLTAVNQVQLMQLLAHHIGILAPLALTETGQWLNVNADMAATVLAQQLHAEKLVLLTDVPGIIHHGNVMTSLSPQQAQQLIRTAVITAGMQPKVQAAIAAIQTGVKQAIITNAIDQPGTAIIQEVAV</sequence>
<protein>
    <recommendedName>
        <fullName evidence="1">Acetylglutamate kinase</fullName>
        <ecNumber evidence="1">2.7.2.8</ecNumber>
    </recommendedName>
    <alternativeName>
        <fullName evidence="1">N-acetyl-L-glutamate 5-phosphotransferase</fullName>
    </alternativeName>
    <alternativeName>
        <fullName evidence="1">NAG kinase</fullName>
        <shortName evidence="1">NAGK</shortName>
    </alternativeName>
</protein>
<organism>
    <name type="scientific">Lactiplantibacillus plantarum (strain ATCC BAA-793 / NCIMB 8826 / WCFS1)</name>
    <name type="common">Lactobacillus plantarum</name>
    <dbReference type="NCBI Taxonomy" id="220668"/>
    <lineage>
        <taxon>Bacteria</taxon>
        <taxon>Bacillati</taxon>
        <taxon>Bacillota</taxon>
        <taxon>Bacilli</taxon>
        <taxon>Lactobacillales</taxon>
        <taxon>Lactobacillaceae</taxon>
        <taxon>Lactiplantibacillus</taxon>
    </lineage>
</organism>
<accession>O08320</accession>
<accession>F9UL05</accession>
<reference key="1">
    <citation type="journal article" date="1997" name="J. Bacteriol.">
        <title>Arginine biosynthesis and regulation in Lactobacillus plantarum: the carA gene and the argCJBDF cluster are divergently transcribed.</title>
        <authorList>
            <person name="Bringel F."/>
            <person name="Frey L."/>
            <person name="Boivin S."/>
            <person name="Hubert J.-C."/>
        </authorList>
    </citation>
    <scope>NUCLEOTIDE SEQUENCE [GENOMIC DNA]</scope>
    <source>
        <strain>ATCC 8014 / CCM 1904 / DSM 20205 / NCDO 82 / NCIB 6376</strain>
    </source>
</reference>
<reference key="2">
    <citation type="journal article" date="2003" name="Proc. Natl. Acad. Sci. U.S.A.">
        <title>Complete genome sequence of Lactobacillus plantarum WCFS1.</title>
        <authorList>
            <person name="Kleerebezem M."/>
            <person name="Boekhorst J."/>
            <person name="van Kranenburg R."/>
            <person name="Molenaar D."/>
            <person name="Kuipers O.P."/>
            <person name="Leer R."/>
            <person name="Tarchini R."/>
            <person name="Peters S.A."/>
            <person name="Sandbrink H.M."/>
            <person name="Fiers M.W.E.J."/>
            <person name="Stiekema W."/>
            <person name="Klein Lankhorst R.M."/>
            <person name="Bron P.A."/>
            <person name="Hoffer S.M."/>
            <person name="Nierop Groot M.N."/>
            <person name="Kerkhoven R."/>
            <person name="De Vries M."/>
            <person name="Ursing B."/>
            <person name="De Vos W.M."/>
            <person name="Siezen R.J."/>
        </authorList>
    </citation>
    <scope>NUCLEOTIDE SEQUENCE [LARGE SCALE GENOMIC DNA]</scope>
    <source>
        <strain>ATCC BAA-793 / NCIMB 8826 / WCFS1</strain>
    </source>
</reference>
<reference key="3">
    <citation type="journal article" date="2012" name="J. Bacteriol.">
        <title>Complete resequencing and reannotation of the Lactobacillus plantarum WCFS1 genome.</title>
        <authorList>
            <person name="Siezen R.J."/>
            <person name="Francke C."/>
            <person name="Renckens B."/>
            <person name="Boekhorst J."/>
            <person name="Wels M."/>
            <person name="Kleerebezem M."/>
            <person name="van Hijum S.A."/>
        </authorList>
    </citation>
    <scope>NUCLEOTIDE SEQUENCE [LARGE SCALE GENOMIC DNA]</scope>
    <scope>GENOME REANNOTATION</scope>
    <source>
        <strain>ATCC BAA-793 / NCIMB 8826 / WCFS1</strain>
    </source>
</reference>
<gene>
    <name evidence="1" type="primary">argB</name>
    <name type="ordered locus">lp_0530</name>
</gene>
<proteinExistence type="inferred from homology"/>
<feature type="chain" id="PRO_0000112623" description="Acetylglutamate kinase">
    <location>
        <begin position="1"/>
        <end position="248"/>
    </location>
</feature>
<feature type="binding site" evidence="1">
    <location>
        <begin position="41"/>
        <end position="42"/>
    </location>
    <ligand>
        <name>substrate</name>
    </ligand>
</feature>
<feature type="binding site" evidence="1">
    <location>
        <position position="63"/>
    </location>
    <ligand>
        <name>substrate</name>
    </ligand>
</feature>
<feature type="binding site" evidence="1">
    <location>
        <position position="155"/>
    </location>
    <ligand>
        <name>substrate</name>
    </ligand>
</feature>
<feature type="site" description="Transition state stabilizer" evidence="1">
    <location>
        <position position="8"/>
    </location>
</feature>
<feature type="site" description="Transition state stabilizer" evidence="1">
    <location>
        <position position="214"/>
    </location>
</feature>
<feature type="sequence conflict" description="In Ref. 1; CAA68241." evidence="2" ref="1">
    <original>H</original>
    <variation>Q</variation>
    <location>
        <position position="32"/>
    </location>
</feature>
<keyword id="KW-0028">Amino-acid biosynthesis</keyword>
<keyword id="KW-0055">Arginine biosynthesis</keyword>
<keyword id="KW-0067">ATP-binding</keyword>
<keyword id="KW-0963">Cytoplasm</keyword>
<keyword id="KW-0418">Kinase</keyword>
<keyword id="KW-0547">Nucleotide-binding</keyword>
<keyword id="KW-1185">Reference proteome</keyword>
<keyword id="KW-0808">Transferase</keyword>
<name>ARGB_LACPL</name>